<feature type="chain" id="PRO_0000252746" description="Phosphoribosylformylglycinamidine synthase subunit PurQ">
    <location>
        <begin position="1"/>
        <end position="224"/>
    </location>
</feature>
<feature type="domain" description="Glutamine amidotransferase type-1" evidence="1">
    <location>
        <begin position="2"/>
        <end position="224"/>
    </location>
</feature>
<feature type="region of interest" description="Disordered" evidence="2">
    <location>
        <begin position="204"/>
        <end position="224"/>
    </location>
</feature>
<feature type="active site" description="Nucleophile" evidence="1">
    <location>
        <position position="85"/>
    </location>
</feature>
<feature type="active site" evidence="1">
    <location>
        <position position="202"/>
    </location>
</feature>
<feature type="active site" evidence="1">
    <location>
        <position position="204"/>
    </location>
</feature>
<keyword id="KW-0067">ATP-binding</keyword>
<keyword id="KW-0963">Cytoplasm</keyword>
<keyword id="KW-0315">Glutamine amidotransferase</keyword>
<keyword id="KW-0378">Hydrolase</keyword>
<keyword id="KW-0436">Ligase</keyword>
<keyword id="KW-0547">Nucleotide-binding</keyword>
<keyword id="KW-0658">Purine biosynthesis</keyword>
<keyword id="KW-1185">Reference proteome</keyword>
<comment type="function">
    <text evidence="1">Part of the phosphoribosylformylglycinamidine synthase complex involved in the purines biosynthetic pathway. Catalyzes the ATP-dependent conversion of formylglycinamide ribonucleotide (FGAR) and glutamine to yield formylglycinamidine ribonucleotide (FGAM) and glutamate. The FGAM synthase complex is composed of three subunits. PurQ produces an ammonia molecule by converting glutamine to glutamate. PurL transfers the ammonia molecule to FGAR to form FGAM in an ATP-dependent manner. PurS interacts with PurQ and PurL and is thought to assist in the transfer of the ammonia molecule from PurQ to PurL.</text>
</comment>
<comment type="catalytic activity">
    <reaction evidence="1">
        <text>N(2)-formyl-N(1)-(5-phospho-beta-D-ribosyl)glycinamide + L-glutamine + ATP + H2O = 2-formamido-N(1)-(5-O-phospho-beta-D-ribosyl)acetamidine + L-glutamate + ADP + phosphate + H(+)</text>
        <dbReference type="Rhea" id="RHEA:17129"/>
        <dbReference type="ChEBI" id="CHEBI:15377"/>
        <dbReference type="ChEBI" id="CHEBI:15378"/>
        <dbReference type="ChEBI" id="CHEBI:29985"/>
        <dbReference type="ChEBI" id="CHEBI:30616"/>
        <dbReference type="ChEBI" id="CHEBI:43474"/>
        <dbReference type="ChEBI" id="CHEBI:58359"/>
        <dbReference type="ChEBI" id="CHEBI:147286"/>
        <dbReference type="ChEBI" id="CHEBI:147287"/>
        <dbReference type="ChEBI" id="CHEBI:456216"/>
        <dbReference type="EC" id="6.3.5.3"/>
    </reaction>
</comment>
<comment type="catalytic activity">
    <reaction evidence="1">
        <text>L-glutamine + H2O = L-glutamate + NH4(+)</text>
        <dbReference type="Rhea" id="RHEA:15889"/>
        <dbReference type="ChEBI" id="CHEBI:15377"/>
        <dbReference type="ChEBI" id="CHEBI:28938"/>
        <dbReference type="ChEBI" id="CHEBI:29985"/>
        <dbReference type="ChEBI" id="CHEBI:58359"/>
        <dbReference type="EC" id="3.5.1.2"/>
    </reaction>
</comment>
<comment type="pathway">
    <text evidence="1">Purine metabolism; IMP biosynthesis via de novo pathway; 5-amino-1-(5-phospho-D-ribosyl)imidazole from N(2)-formyl-N(1)-(5-phospho-D-ribosyl)glycinamide: step 1/2.</text>
</comment>
<comment type="subunit">
    <text evidence="1">Part of the FGAM synthase complex composed of 1 PurL, 1 PurQ and 2 PurS subunits.</text>
</comment>
<comment type="subcellular location">
    <subcellularLocation>
        <location evidence="1">Cytoplasm</location>
    </subcellularLocation>
</comment>
<accession>Q3IMR2</accession>
<gene>
    <name evidence="1" type="primary">purQ</name>
    <name type="ordered locus">NP_5010A</name>
</gene>
<dbReference type="EC" id="6.3.5.3" evidence="1"/>
<dbReference type="EC" id="3.5.1.2" evidence="1"/>
<dbReference type="EMBL" id="CR936257">
    <property type="protein sequence ID" value="CAI50596.1"/>
    <property type="molecule type" value="Genomic_DNA"/>
</dbReference>
<dbReference type="RefSeq" id="WP_011324206.1">
    <property type="nucleotide sequence ID" value="NC_007426.1"/>
</dbReference>
<dbReference type="SMR" id="Q3IMR2"/>
<dbReference type="STRING" id="348780.NP_5010A"/>
<dbReference type="EnsemblBacteria" id="CAI50596">
    <property type="protein sequence ID" value="CAI50596"/>
    <property type="gene ID" value="NP_5010A"/>
</dbReference>
<dbReference type="GeneID" id="3703077"/>
<dbReference type="KEGG" id="nph:NP_5010A"/>
<dbReference type="eggNOG" id="arCOG00102">
    <property type="taxonomic scope" value="Archaea"/>
</dbReference>
<dbReference type="HOGENOM" id="CLU_001031_3_1_2"/>
<dbReference type="OrthoDB" id="6486at2157"/>
<dbReference type="UniPathway" id="UPA00074">
    <property type="reaction ID" value="UER00128"/>
</dbReference>
<dbReference type="Proteomes" id="UP000002698">
    <property type="component" value="Chromosome"/>
</dbReference>
<dbReference type="GO" id="GO:0005737">
    <property type="term" value="C:cytoplasm"/>
    <property type="evidence" value="ECO:0007669"/>
    <property type="project" value="UniProtKB-SubCell"/>
</dbReference>
<dbReference type="GO" id="GO:0005524">
    <property type="term" value="F:ATP binding"/>
    <property type="evidence" value="ECO:0007669"/>
    <property type="project" value="UniProtKB-KW"/>
</dbReference>
<dbReference type="GO" id="GO:0004359">
    <property type="term" value="F:glutaminase activity"/>
    <property type="evidence" value="ECO:0007669"/>
    <property type="project" value="UniProtKB-EC"/>
</dbReference>
<dbReference type="GO" id="GO:0004642">
    <property type="term" value="F:phosphoribosylformylglycinamidine synthase activity"/>
    <property type="evidence" value="ECO:0007669"/>
    <property type="project" value="UniProtKB-UniRule"/>
</dbReference>
<dbReference type="GO" id="GO:0006189">
    <property type="term" value="P:'de novo' IMP biosynthetic process"/>
    <property type="evidence" value="ECO:0007669"/>
    <property type="project" value="UniProtKB-UniRule"/>
</dbReference>
<dbReference type="CDD" id="cd01740">
    <property type="entry name" value="GATase1_FGAR_AT"/>
    <property type="match status" value="1"/>
</dbReference>
<dbReference type="Gene3D" id="3.40.50.880">
    <property type="match status" value="1"/>
</dbReference>
<dbReference type="HAMAP" id="MF_00421">
    <property type="entry name" value="PurQ"/>
    <property type="match status" value="1"/>
</dbReference>
<dbReference type="InterPro" id="IPR029062">
    <property type="entry name" value="Class_I_gatase-like"/>
</dbReference>
<dbReference type="InterPro" id="IPR010075">
    <property type="entry name" value="PRibForGlyAmidine_synth_PurQ"/>
</dbReference>
<dbReference type="NCBIfam" id="TIGR01737">
    <property type="entry name" value="FGAM_synth_I"/>
    <property type="match status" value="1"/>
</dbReference>
<dbReference type="NCBIfam" id="NF002957">
    <property type="entry name" value="PRK03619.1"/>
    <property type="match status" value="1"/>
</dbReference>
<dbReference type="PANTHER" id="PTHR47552">
    <property type="entry name" value="PHOSPHORIBOSYLFORMYLGLYCINAMIDINE SYNTHASE SUBUNIT PURQ"/>
    <property type="match status" value="1"/>
</dbReference>
<dbReference type="PANTHER" id="PTHR47552:SF1">
    <property type="entry name" value="PHOSPHORIBOSYLFORMYLGLYCINAMIDINE SYNTHASE SUBUNIT PURQ"/>
    <property type="match status" value="1"/>
</dbReference>
<dbReference type="Pfam" id="PF13507">
    <property type="entry name" value="GATase_5"/>
    <property type="match status" value="1"/>
</dbReference>
<dbReference type="PIRSF" id="PIRSF001586">
    <property type="entry name" value="FGAM_synth_I"/>
    <property type="match status" value="1"/>
</dbReference>
<dbReference type="SMART" id="SM01211">
    <property type="entry name" value="GATase_5"/>
    <property type="match status" value="1"/>
</dbReference>
<dbReference type="SUPFAM" id="SSF52317">
    <property type="entry name" value="Class I glutamine amidotransferase-like"/>
    <property type="match status" value="1"/>
</dbReference>
<dbReference type="PROSITE" id="PS51273">
    <property type="entry name" value="GATASE_TYPE_1"/>
    <property type="match status" value="1"/>
</dbReference>
<protein>
    <recommendedName>
        <fullName evidence="1">Phosphoribosylformylglycinamidine synthase subunit PurQ</fullName>
        <shortName evidence="1">FGAM synthase</shortName>
        <ecNumber evidence="1">6.3.5.3</ecNumber>
    </recommendedName>
    <alternativeName>
        <fullName evidence="1">Formylglycinamide ribonucleotide amidotransferase subunit I</fullName>
        <shortName evidence="1">FGAR amidotransferase I</shortName>
        <shortName evidence="1">FGAR-AT I</shortName>
    </alternativeName>
    <alternativeName>
        <fullName evidence="1">Glutaminase PurQ</fullName>
        <ecNumber evidence="1">3.5.1.2</ecNumber>
    </alternativeName>
    <alternativeName>
        <fullName evidence="1">Phosphoribosylformylglycinamidine synthase subunit I</fullName>
    </alternativeName>
</protein>
<reference key="1">
    <citation type="journal article" date="2005" name="Genome Res.">
        <title>Living with two extremes: conclusions from the genome sequence of Natronomonas pharaonis.</title>
        <authorList>
            <person name="Falb M."/>
            <person name="Pfeiffer F."/>
            <person name="Palm P."/>
            <person name="Rodewald K."/>
            <person name="Hickmann V."/>
            <person name="Tittor J."/>
            <person name="Oesterhelt D."/>
        </authorList>
    </citation>
    <scope>NUCLEOTIDE SEQUENCE [LARGE SCALE GENOMIC DNA]</scope>
    <source>
        <strain>ATCC 35678 / DSM 2160 / CIP 103997 / JCM 8858 / NBRC 14720 / NCIMB 2260 / Gabara</strain>
    </source>
</reference>
<sequence length="224" mass="24031">MTVAIIRFGGSNCDRDAERALAHLDIDAEIVWHEDGLPEETTGVMIPGGFSYGDYLRAGAMAARAPIMDDVREQAEAGVPVLGVCNGAQIGSEGDLTPGAFTTNRSARFQCEPVYLRVENAETPWTEAYEDGEVIEVPIAHGEGRFEIADDELETLVDEDRVIFRYCDADGNVTDAANPNGSKDNVAGVLGEHESVAVLMPHPERASLPDIGPTDGQGVLEGFR</sequence>
<proteinExistence type="inferred from homology"/>
<evidence type="ECO:0000255" key="1">
    <source>
        <dbReference type="HAMAP-Rule" id="MF_00421"/>
    </source>
</evidence>
<evidence type="ECO:0000256" key="2">
    <source>
        <dbReference type="SAM" id="MobiDB-lite"/>
    </source>
</evidence>
<organism>
    <name type="scientific">Natronomonas pharaonis (strain ATCC 35678 / DSM 2160 / CIP 103997 / JCM 8858 / NBRC 14720 / NCIMB 2260 / Gabara)</name>
    <name type="common">Halobacterium pharaonis</name>
    <dbReference type="NCBI Taxonomy" id="348780"/>
    <lineage>
        <taxon>Archaea</taxon>
        <taxon>Methanobacteriati</taxon>
        <taxon>Methanobacteriota</taxon>
        <taxon>Stenosarchaea group</taxon>
        <taxon>Halobacteria</taxon>
        <taxon>Halobacteriales</taxon>
        <taxon>Haloarculaceae</taxon>
        <taxon>Natronomonas</taxon>
    </lineage>
</organism>
<name>PURQ_NATPD</name>